<accession>Q5PCR0</accession>
<sequence length="418" mass="46105">MTLLALGINHKTAPVSLRERVTFSPDTLDQALDSLLAQPMVQGGVVLSTCNRTELYLSVEEQDNLQEALIRWLCDYHNLNEDDLRNSLYWHQDNDAVSHLMRVASGLDSLVLGEPQILGQVKKAFADSQKGHLNASALERMFQKSFSVAKRVRTETDIGASAVSVAFAACTLARQIFESLSTVTVLLVGAGETIELVARHLREHKVQKMIIANRTRERAQALADEVGAEVISLSDIDARLQDADIIISSTASPLPIIGKGMVERALKSRRNQPMLLVDIAVPRDVEPEVGKLANAYLYSVDDLQSIISHNLAQRQAAAVEAETIVEQEASEFMAWLRAQGASETIREYRSQSEQIRDELTTKALSALQQGGDAQAILQDLAWKLTNRLIHAPTKSLQQAARDGDDERLNILRDSLGLE</sequence>
<dbReference type="EC" id="1.2.1.70" evidence="1"/>
<dbReference type="EMBL" id="CP000026">
    <property type="protein sequence ID" value="AAV77065.1"/>
    <property type="molecule type" value="Genomic_DNA"/>
</dbReference>
<dbReference type="RefSeq" id="WP_000173208.1">
    <property type="nucleotide sequence ID" value="NC_006511.1"/>
</dbReference>
<dbReference type="SMR" id="Q5PCR0"/>
<dbReference type="KEGG" id="spt:SPA1096"/>
<dbReference type="HOGENOM" id="CLU_035113_2_2_6"/>
<dbReference type="UniPathway" id="UPA00251">
    <property type="reaction ID" value="UER00316"/>
</dbReference>
<dbReference type="Proteomes" id="UP000008185">
    <property type="component" value="Chromosome"/>
</dbReference>
<dbReference type="GO" id="GO:0008883">
    <property type="term" value="F:glutamyl-tRNA reductase activity"/>
    <property type="evidence" value="ECO:0007669"/>
    <property type="project" value="UniProtKB-UniRule"/>
</dbReference>
<dbReference type="GO" id="GO:0050661">
    <property type="term" value="F:NADP binding"/>
    <property type="evidence" value="ECO:0007669"/>
    <property type="project" value="InterPro"/>
</dbReference>
<dbReference type="GO" id="GO:0019353">
    <property type="term" value="P:protoporphyrinogen IX biosynthetic process from glutamate"/>
    <property type="evidence" value="ECO:0007669"/>
    <property type="project" value="TreeGrafter"/>
</dbReference>
<dbReference type="CDD" id="cd05213">
    <property type="entry name" value="NAD_bind_Glutamyl_tRNA_reduct"/>
    <property type="match status" value="1"/>
</dbReference>
<dbReference type="FunFam" id="3.30.460.30:FF:000001">
    <property type="entry name" value="Glutamyl-tRNA reductase"/>
    <property type="match status" value="1"/>
</dbReference>
<dbReference type="FunFam" id="3.40.50.720:FF:000031">
    <property type="entry name" value="Glutamyl-tRNA reductase"/>
    <property type="match status" value="1"/>
</dbReference>
<dbReference type="Gene3D" id="3.30.460.30">
    <property type="entry name" value="Glutamyl-tRNA reductase, N-terminal domain"/>
    <property type="match status" value="1"/>
</dbReference>
<dbReference type="Gene3D" id="3.40.50.720">
    <property type="entry name" value="NAD(P)-binding Rossmann-like Domain"/>
    <property type="match status" value="1"/>
</dbReference>
<dbReference type="HAMAP" id="MF_00087">
    <property type="entry name" value="Glu_tRNA_reductase"/>
    <property type="match status" value="1"/>
</dbReference>
<dbReference type="InterPro" id="IPR000343">
    <property type="entry name" value="4pyrrol_synth_GluRdtase"/>
</dbReference>
<dbReference type="InterPro" id="IPR015896">
    <property type="entry name" value="4pyrrol_synth_GluRdtase_dimer"/>
</dbReference>
<dbReference type="InterPro" id="IPR015895">
    <property type="entry name" value="4pyrrol_synth_GluRdtase_N"/>
</dbReference>
<dbReference type="InterPro" id="IPR018214">
    <property type="entry name" value="GluRdtase_CS"/>
</dbReference>
<dbReference type="InterPro" id="IPR036453">
    <property type="entry name" value="GluRdtase_dimer_dom_sf"/>
</dbReference>
<dbReference type="InterPro" id="IPR036343">
    <property type="entry name" value="GluRdtase_N_sf"/>
</dbReference>
<dbReference type="InterPro" id="IPR036291">
    <property type="entry name" value="NAD(P)-bd_dom_sf"/>
</dbReference>
<dbReference type="InterPro" id="IPR006151">
    <property type="entry name" value="Shikm_DH/Glu-tRNA_Rdtase"/>
</dbReference>
<dbReference type="NCBIfam" id="TIGR01035">
    <property type="entry name" value="hemA"/>
    <property type="match status" value="1"/>
</dbReference>
<dbReference type="PANTHER" id="PTHR43013">
    <property type="entry name" value="GLUTAMYL-TRNA REDUCTASE"/>
    <property type="match status" value="1"/>
</dbReference>
<dbReference type="PANTHER" id="PTHR43013:SF1">
    <property type="entry name" value="GLUTAMYL-TRNA REDUCTASE"/>
    <property type="match status" value="1"/>
</dbReference>
<dbReference type="Pfam" id="PF00745">
    <property type="entry name" value="GlutR_dimer"/>
    <property type="match status" value="1"/>
</dbReference>
<dbReference type="Pfam" id="PF05201">
    <property type="entry name" value="GlutR_N"/>
    <property type="match status" value="1"/>
</dbReference>
<dbReference type="Pfam" id="PF01488">
    <property type="entry name" value="Shikimate_DH"/>
    <property type="match status" value="1"/>
</dbReference>
<dbReference type="PIRSF" id="PIRSF000445">
    <property type="entry name" value="4pyrrol_synth_GluRdtase"/>
    <property type="match status" value="1"/>
</dbReference>
<dbReference type="SUPFAM" id="SSF69742">
    <property type="entry name" value="Glutamyl tRNA-reductase catalytic, N-terminal domain"/>
    <property type="match status" value="1"/>
</dbReference>
<dbReference type="SUPFAM" id="SSF69075">
    <property type="entry name" value="Glutamyl tRNA-reductase dimerization domain"/>
    <property type="match status" value="1"/>
</dbReference>
<dbReference type="SUPFAM" id="SSF51735">
    <property type="entry name" value="NAD(P)-binding Rossmann-fold domains"/>
    <property type="match status" value="1"/>
</dbReference>
<dbReference type="PROSITE" id="PS00747">
    <property type="entry name" value="GLUTR"/>
    <property type="match status" value="1"/>
</dbReference>
<proteinExistence type="inferred from homology"/>
<organism>
    <name type="scientific">Salmonella paratyphi A (strain ATCC 9150 / SARB42)</name>
    <dbReference type="NCBI Taxonomy" id="295319"/>
    <lineage>
        <taxon>Bacteria</taxon>
        <taxon>Pseudomonadati</taxon>
        <taxon>Pseudomonadota</taxon>
        <taxon>Gammaproteobacteria</taxon>
        <taxon>Enterobacterales</taxon>
        <taxon>Enterobacteriaceae</taxon>
        <taxon>Salmonella</taxon>
    </lineage>
</organism>
<name>HEM1_SALPA</name>
<reference key="1">
    <citation type="journal article" date="2004" name="Nat. Genet.">
        <title>Comparison of genome degradation in Paratyphi A and Typhi, human-restricted serovars of Salmonella enterica that cause typhoid.</title>
        <authorList>
            <person name="McClelland M."/>
            <person name="Sanderson K.E."/>
            <person name="Clifton S.W."/>
            <person name="Latreille P."/>
            <person name="Porwollik S."/>
            <person name="Sabo A."/>
            <person name="Meyer R."/>
            <person name="Bieri T."/>
            <person name="Ozersky P."/>
            <person name="McLellan M."/>
            <person name="Harkins C.R."/>
            <person name="Wang C."/>
            <person name="Nguyen C."/>
            <person name="Berghoff A."/>
            <person name="Elliott G."/>
            <person name="Kohlberg S."/>
            <person name="Strong C."/>
            <person name="Du F."/>
            <person name="Carter J."/>
            <person name="Kremizki C."/>
            <person name="Layman D."/>
            <person name="Leonard S."/>
            <person name="Sun H."/>
            <person name="Fulton L."/>
            <person name="Nash W."/>
            <person name="Miner T."/>
            <person name="Minx P."/>
            <person name="Delehaunty K."/>
            <person name="Fronick C."/>
            <person name="Magrini V."/>
            <person name="Nhan M."/>
            <person name="Warren W."/>
            <person name="Florea L."/>
            <person name="Spieth J."/>
            <person name="Wilson R.K."/>
        </authorList>
    </citation>
    <scope>NUCLEOTIDE SEQUENCE [LARGE SCALE GENOMIC DNA]</scope>
    <source>
        <strain>ATCC 9150 / SARB42</strain>
    </source>
</reference>
<evidence type="ECO:0000255" key="1">
    <source>
        <dbReference type="HAMAP-Rule" id="MF_00087"/>
    </source>
</evidence>
<feature type="chain" id="PRO_1000004684" description="Glutamyl-tRNA reductase">
    <location>
        <begin position="1"/>
        <end position="418"/>
    </location>
</feature>
<feature type="active site" description="Nucleophile" evidence="1">
    <location>
        <position position="50"/>
    </location>
</feature>
<feature type="binding site" evidence="1">
    <location>
        <begin position="49"/>
        <end position="52"/>
    </location>
    <ligand>
        <name>substrate</name>
    </ligand>
</feature>
<feature type="binding site" evidence="1">
    <location>
        <position position="109"/>
    </location>
    <ligand>
        <name>substrate</name>
    </ligand>
</feature>
<feature type="binding site" evidence="1">
    <location>
        <begin position="114"/>
        <end position="116"/>
    </location>
    <ligand>
        <name>substrate</name>
    </ligand>
</feature>
<feature type="binding site" evidence="1">
    <location>
        <position position="120"/>
    </location>
    <ligand>
        <name>substrate</name>
    </ligand>
</feature>
<feature type="binding site" evidence="1">
    <location>
        <begin position="189"/>
        <end position="194"/>
    </location>
    <ligand>
        <name>NADP(+)</name>
        <dbReference type="ChEBI" id="CHEBI:58349"/>
    </ligand>
</feature>
<feature type="site" description="Important for activity" evidence="1">
    <location>
        <position position="99"/>
    </location>
</feature>
<comment type="function">
    <text evidence="1">Catalyzes the NADPH-dependent reduction of glutamyl-tRNA(Glu) to glutamate 1-semialdehyde (GSA).</text>
</comment>
<comment type="catalytic activity">
    <reaction evidence="1">
        <text>(S)-4-amino-5-oxopentanoate + tRNA(Glu) + NADP(+) = L-glutamyl-tRNA(Glu) + NADPH + H(+)</text>
        <dbReference type="Rhea" id="RHEA:12344"/>
        <dbReference type="Rhea" id="RHEA-COMP:9663"/>
        <dbReference type="Rhea" id="RHEA-COMP:9680"/>
        <dbReference type="ChEBI" id="CHEBI:15378"/>
        <dbReference type="ChEBI" id="CHEBI:57501"/>
        <dbReference type="ChEBI" id="CHEBI:57783"/>
        <dbReference type="ChEBI" id="CHEBI:58349"/>
        <dbReference type="ChEBI" id="CHEBI:78442"/>
        <dbReference type="ChEBI" id="CHEBI:78520"/>
        <dbReference type="EC" id="1.2.1.70"/>
    </reaction>
</comment>
<comment type="pathway">
    <text evidence="1">Porphyrin-containing compound metabolism; protoporphyrin-IX biosynthesis; 5-aminolevulinate from L-glutamyl-tRNA(Glu): step 1/2.</text>
</comment>
<comment type="subunit">
    <text evidence="1">Homodimer.</text>
</comment>
<comment type="domain">
    <text evidence="1">Possesses an unusual extended V-shaped dimeric structure with each monomer consisting of three distinct domains arranged along a curved 'spinal' alpha-helix. The N-terminal catalytic domain specifically recognizes the glutamate moiety of the substrate. The second domain is the NADPH-binding domain, and the third C-terminal domain is responsible for dimerization.</text>
</comment>
<comment type="miscellaneous">
    <text evidence="1">During catalysis, the active site Cys acts as a nucleophile attacking the alpha-carbonyl group of tRNA-bound glutamate with the formation of a thioester intermediate between enzyme and glutamate, and the concomitant release of tRNA(Glu). The thioester intermediate is finally reduced by direct hydride transfer from NADPH, to form the product GSA.</text>
</comment>
<comment type="similarity">
    <text evidence="1">Belongs to the glutamyl-tRNA reductase family.</text>
</comment>
<gene>
    <name evidence="1" type="primary">hemA</name>
    <name type="ordered locus">SPA1096</name>
</gene>
<protein>
    <recommendedName>
        <fullName evidence="1">Glutamyl-tRNA reductase</fullName>
        <shortName evidence="1">GluTR</shortName>
        <ecNumber evidence="1">1.2.1.70</ecNumber>
    </recommendedName>
</protein>
<keyword id="KW-0521">NADP</keyword>
<keyword id="KW-0560">Oxidoreductase</keyword>
<keyword id="KW-0627">Porphyrin biosynthesis</keyword>